<evidence type="ECO:0000250" key="1">
    <source>
        <dbReference type="UniProtKB" id="Q9GZP9"/>
    </source>
</evidence>
<evidence type="ECO:0000255" key="2"/>
<evidence type="ECO:0000256" key="3">
    <source>
        <dbReference type="SAM" id="MobiDB-lite"/>
    </source>
</evidence>
<evidence type="ECO:0000269" key="4">
    <source>
    </source>
</evidence>
<evidence type="ECO:0000269" key="5">
    <source>
    </source>
</evidence>
<evidence type="ECO:0000269" key="6">
    <source>
    </source>
</evidence>
<evidence type="ECO:0000269" key="7">
    <source>
    </source>
</evidence>
<evidence type="ECO:0000269" key="8">
    <source>
    </source>
</evidence>
<evidence type="ECO:0000303" key="9">
    <source>
    </source>
</evidence>
<evidence type="ECO:0000303" key="10">
    <source>
    </source>
</evidence>
<evidence type="ECO:0000303" key="11">
    <source>
    </source>
</evidence>
<evidence type="ECO:0000305" key="12"/>
<evidence type="ECO:0000305" key="13">
    <source>
    </source>
</evidence>
<evidence type="ECO:0000312" key="14">
    <source>
        <dbReference type="MGI" id="MGI:2151483"/>
    </source>
</evidence>
<accession>Q8BNI4</accession>
<accession>Q920I5</accession>
<accession>Q99J12</accession>
<name>DERL2_MOUSE</name>
<proteinExistence type="evidence at protein level"/>
<protein>
    <recommendedName>
        <fullName evidence="11">Derlin-2</fullName>
    </recommendedName>
    <alternativeName>
        <fullName>Degradation in endoplasmic reticulum protein 2</fullName>
    </alternativeName>
    <alternativeName>
        <fullName evidence="11">Der1-like protein 2</fullName>
    </alternativeName>
    <alternativeName>
        <fullName evidence="9">F-LANa</fullName>
    </alternativeName>
</protein>
<feature type="chain" id="PRO_0000219046" description="Derlin-2">
    <location>
        <begin position="1"/>
        <end position="239"/>
    </location>
</feature>
<feature type="topological domain" description="Cytoplasmic" evidence="2">
    <location>
        <begin position="1"/>
        <end position="57"/>
    </location>
</feature>
<feature type="transmembrane region" description="Helical; Name=1" evidence="2">
    <location>
        <begin position="58"/>
        <end position="78"/>
    </location>
</feature>
<feature type="topological domain" description="Lumenal" evidence="2">
    <location>
        <begin position="79"/>
        <end position="96"/>
    </location>
</feature>
<feature type="transmembrane region" description="Helical; Name=2" evidence="2">
    <location>
        <begin position="97"/>
        <end position="117"/>
    </location>
</feature>
<feature type="topological domain" description="Cytoplasmic" evidence="2">
    <location>
        <begin position="118"/>
        <end position="150"/>
    </location>
</feature>
<feature type="transmembrane region" description="Helical; Name=3" evidence="2">
    <location>
        <begin position="151"/>
        <end position="171"/>
    </location>
</feature>
<feature type="topological domain" description="Lumenal" evidence="2">
    <location>
        <position position="172"/>
    </location>
</feature>
<feature type="transmembrane region" description="Helical; Name=4" evidence="2">
    <location>
        <begin position="173"/>
        <end position="193"/>
    </location>
</feature>
<feature type="topological domain" description="Cytoplasmic" evidence="2">
    <location>
        <begin position="194"/>
        <end position="239"/>
    </location>
</feature>
<feature type="region of interest" description="Disordered" evidence="3">
    <location>
        <begin position="214"/>
        <end position="239"/>
    </location>
</feature>
<feature type="compositionally biased region" description="Gly residues" evidence="3">
    <location>
        <begin position="229"/>
        <end position="239"/>
    </location>
</feature>
<feature type="splice variant" id="VSP_011085" description="In isoform 2." evidence="10">
    <original>EGQRLGG</original>
    <variation>WNKTDLD</variation>
    <location>
        <begin position="233"/>
        <end position="239"/>
    </location>
</feature>
<feature type="sequence conflict" description="In Ref. 1; AAL14868." evidence="12" ref="1">
    <original>G</original>
    <variation>A</variation>
    <location>
        <position position="228"/>
    </location>
</feature>
<comment type="function">
    <text evidence="1">Functional component of endoplasmic reticulum-associated degradation (ERAD) for misfolded lumenal glycoproteins, but not that of misfolded nonglycoproteins. May act by forming a channel that allows the retrotranslocation of misfolded glycoproteins into the cytosol where they are ubiquitinated and degraded by the proteasome. May mediate the interaction between VCP and misfolded glycoproteins. May also be involved in endoplasmic reticulum stress-induced pre-emptive quality control, a mechanism that selectively attenuates the translocation of newly synthesized proteins into the endoplasmic reticulum and reroutes them to the cytosol for proteasomal degradation.</text>
</comment>
<comment type="subunit">
    <text evidence="1 7 8">Forms homo- and heterooligomers with DERL3 and, to a lesser extent, with DERL1 (By similarity). Interacts with the SEL1L/SYVN1 and VCP/SELENOS protein complexes (PubMed:22016385). Mediates association between VCP and EDEM1, as well as that between VCP and the misfolded glycoproteins (By similarity). Interacts with OS9 (By similarity). Interacts with SELENOK and SELENOS (PubMed:22016385). Interacts with the signal recognition particle/SRP and the SRP receptor; in the process of endoplasmic reticulum stress-induced pre-emptive quality control (By similarity). Interacts with CCDC47 (PubMed:25009997).</text>
</comment>
<comment type="subcellular location">
    <subcellularLocation>
        <location evidence="1">Endoplasmic reticulum membrane</location>
        <topology evidence="1">Multi-pass membrane protein</topology>
    </subcellularLocation>
</comment>
<comment type="alternative products">
    <event type="alternative splicing"/>
    <isoform>
        <id>Q8BNI4-1</id>
        <name>1</name>
        <sequence type="displayed"/>
    </isoform>
    <isoform>
        <id>Q8BNI4-2</id>
        <name>2</name>
        <sequence type="described" ref="VSP_011085"/>
    </isoform>
</comment>
<comment type="tissue specificity">
    <text evidence="4 5">Widely expressed, with lowest levels in brain and heart.</text>
</comment>
<comment type="induction">
    <text evidence="5 6">Up-regulated in response to endoplasmic reticulum stress via the ERN1-XBP1 pathway of the unfolded protein response (UPR).</text>
</comment>
<comment type="similarity">
    <text evidence="12">Belongs to the derlin family.</text>
</comment>
<keyword id="KW-0025">Alternative splicing</keyword>
<keyword id="KW-0256">Endoplasmic reticulum</keyword>
<keyword id="KW-0472">Membrane</keyword>
<keyword id="KW-1185">Reference proteome</keyword>
<keyword id="KW-0812">Transmembrane</keyword>
<keyword id="KW-1133">Transmembrane helix</keyword>
<keyword id="KW-0834">Unfolded protein response</keyword>
<dbReference type="EMBL" id="AF208064">
    <property type="protein sequence ID" value="AAL14868.1"/>
    <property type="molecule type" value="mRNA"/>
</dbReference>
<dbReference type="EMBL" id="AK048627">
    <property type="protein sequence ID" value="BAC33399.1"/>
    <property type="molecule type" value="mRNA"/>
</dbReference>
<dbReference type="EMBL" id="AK077659">
    <property type="protein sequence ID" value="BAC36934.1"/>
    <property type="molecule type" value="mRNA"/>
</dbReference>
<dbReference type="EMBL" id="AK082564">
    <property type="protein sequence ID" value="BAC38533.1"/>
    <property type="molecule type" value="mRNA"/>
</dbReference>
<dbReference type="EMBL" id="AK083632">
    <property type="protein sequence ID" value="BAC38974.1"/>
    <property type="molecule type" value="mRNA"/>
</dbReference>
<dbReference type="EMBL" id="BC005682">
    <property type="protein sequence ID" value="AAH05682.1"/>
    <property type="molecule type" value="mRNA"/>
</dbReference>
<dbReference type="CCDS" id="CCDS24972.1">
    <molecule id="Q8BNI4-1"/>
</dbReference>
<dbReference type="RefSeq" id="NP_001278075.1">
    <property type="nucleotide sequence ID" value="NM_001291146.1"/>
</dbReference>
<dbReference type="RefSeq" id="NP_001278076.1">
    <property type="nucleotide sequence ID" value="NM_001291147.1"/>
</dbReference>
<dbReference type="RefSeq" id="NP_001278077.1">
    <property type="nucleotide sequence ID" value="NM_001291148.1"/>
</dbReference>
<dbReference type="RefSeq" id="NP_291040.1">
    <molecule id="Q8BNI4-1"/>
    <property type="nucleotide sequence ID" value="NM_033562.4"/>
</dbReference>
<dbReference type="SMR" id="Q8BNI4"/>
<dbReference type="BioGRID" id="228066">
    <property type="interactions" value="4"/>
</dbReference>
<dbReference type="FunCoup" id="Q8BNI4">
    <property type="interactions" value="2752"/>
</dbReference>
<dbReference type="IntAct" id="Q8BNI4">
    <property type="interactions" value="1"/>
</dbReference>
<dbReference type="STRING" id="10090.ENSMUSP00000117052"/>
<dbReference type="iPTMnet" id="Q8BNI4"/>
<dbReference type="PhosphoSitePlus" id="Q8BNI4"/>
<dbReference type="SwissPalm" id="Q8BNI4"/>
<dbReference type="PaxDb" id="10090-ENSMUSP00000117052"/>
<dbReference type="PeptideAtlas" id="Q8BNI4"/>
<dbReference type="ProteomicsDB" id="277978">
    <molecule id="Q8BNI4-1"/>
</dbReference>
<dbReference type="ProteomicsDB" id="277979">
    <molecule id="Q8BNI4-2"/>
</dbReference>
<dbReference type="Pumba" id="Q8BNI4"/>
<dbReference type="Antibodypedia" id="23707">
    <property type="antibodies" value="134 antibodies from 22 providers"/>
</dbReference>
<dbReference type="DNASU" id="116891"/>
<dbReference type="Ensembl" id="ENSMUST00000108523.10">
    <molecule id="Q8BNI4-2"/>
    <property type="protein sequence ID" value="ENSMUSP00000104163.4"/>
    <property type="gene ID" value="ENSMUSG00000018442.14"/>
</dbReference>
<dbReference type="Ensembl" id="ENSMUST00000143850.8">
    <molecule id="Q8BNI4-1"/>
    <property type="protein sequence ID" value="ENSMUSP00000117052.2"/>
    <property type="gene ID" value="ENSMUSG00000018442.14"/>
</dbReference>
<dbReference type="GeneID" id="116891"/>
<dbReference type="KEGG" id="mmu:116891"/>
<dbReference type="UCSC" id="uc007jxi.2">
    <molecule id="Q8BNI4-2"/>
    <property type="organism name" value="mouse"/>
</dbReference>
<dbReference type="UCSC" id="uc007jxj.2">
    <molecule id="Q8BNI4-1"/>
    <property type="organism name" value="mouse"/>
</dbReference>
<dbReference type="AGR" id="MGI:2151483"/>
<dbReference type="CTD" id="51009"/>
<dbReference type="MGI" id="MGI:2151483">
    <property type="gene designation" value="Derl2"/>
</dbReference>
<dbReference type="VEuPathDB" id="HostDB:ENSMUSG00000018442"/>
<dbReference type="eggNOG" id="KOG0858">
    <property type="taxonomic scope" value="Eukaryota"/>
</dbReference>
<dbReference type="GeneTree" id="ENSGT00530000063156"/>
<dbReference type="HOGENOM" id="CLU_051898_5_2_1"/>
<dbReference type="InParanoid" id="Q8BNI4"/>
<dbReference type="OMA" id="FKSQYWR"/>
<dbReference type="OrthoDB" id="37269at9989"/>
<dbReference type="PhylomeDB" id="Q8BNI4"/>
<dbReference type="TreeFam" id="TF314715"/>
<dbReference type="Reactome" id="R-MMU-382556">
    <property type="pathway name" value="ABC-family proteins mediated transport"/>
</dbReference>
<dbReference type="Reactome" id="R-MMU-5358346">
    <property type="pathway name" value="Hedgehog ligand biogenesis"/>
</dbReference>
<dbReference type="BioGRID-ORCS" id="116891">
    <property type="hits" value="15 hits in 78 CRISPR screens"/>
</dbReference>
<dbReference type="ChiTaRS" id="Derl2">
    <property type="organism name" value="mouse"/>
</dbReference>
<dbReference type="PRO" id="PR:Q8BNI4"/>
<dbReference type="Proteomes" id="UP000000589">
    <property type="component" value="Chromosome 11"/>
</dbReference>
<dbReference type="RNAct" id="Q8BNI4">
    <property type="molecule type" value="protein"/>
</dbReference>
<dbReference type="Bgee" id="ENSMUSG00000018442">
    <property type="expression patterns" value="Expressed in cumulus cell and 257 other cell types or tissues"/>
</dbReference>
<dbReference type="ExpressionAtlas" id="Q8BNI4">
    <property type="expression patterns" value="baseline and differential"/>
</dbReference>
<dbReference type="GO" id="GO:0005769">
    <property type="term" value="C:early endosome"/>
    <property type="evidence" value="ECO:0000314"/>
    <property type="project" value="MGI"/>
</dbReference>
<dbReference type="GO" id="GO:0005783">
    <property type="term" value="C:endoplasmic reticulum"/>
    <property type="evidence" value="ECO:0000314"/>
    <property type="project" value="MGI"/>
</dbReference>
<dbReference type="GO" id="GO:0005789">
    <property type="term" value="C:endoplasmic reticulum membrane"/>
    <property type="evidence" value="ECO:0000250"/>
    <property type="project" value="UniProtKB"/>
</dbReference>
<dbReference type="GO" id="GO:0005770">
    <property type="term" value="C:late endosome"/>
    <property type="evidence" value="ECO:0000314"/>
    <property type="project" value="MGI"/>
</dbReference>
<dbReference type="GO" id="GO:0005047">
    <property type="term" value="F:signal recognition particle binding"/>
    <property type="evidence" value="ECO:0000250"/>
    <property type="project" value="UniProtKB"/>
</dbReference>
<dbReference type="GO" id="GO:0030968">
    <property type="term" value="P:endoplasmic reticulum unfolded protein response"/>
    <property type="evidence" value="ECO:0000250"/>
    <property type="project" value="UniProtKB"/>
</dbReference>
<dbReference type="GO" id="GO:0036503">
    <property type="term" value="P:ERAD pathway"/>
    <property type="evidence" value="ECO:0000250"/>
    <property type="project" value="UniProtKB"/>
</dbReference>
<dbReference type="GO" id="GO:1904153">
    <property type="term" value="P:negative regulation of retrograde protein transport, ER to cytosol"/>
    <property type="evidence" value="ECO:0007669"/>
    <property type="project" value="Ensembl"/>
</dbReference>
<dbReference type="GO" id="GO:0030307">
    <property type="term" value="P:positive regulation of cell growth"/>
    <property type="evidence" value="ECO:0000250"/>
    <property type="project" value="UniProtKB"/>
</dbReference>
<dbReference type="GO" id="GO:0008284">
    <property type="term" value="P:positive regulation of cell population proliferation"/>
    <property type="evidence" value="ECO:0000250"/>
    <property type="project" value="UniProtKB"/>
</dbReference>
<dbReference type="GO" id="GO:0030970">
    <property type="term" value="P:retrograde protein transport, ER to cytosol"/>
    <property type="evidence" value="ECO:0000315"/>
    <property type="project" value="MGI"/>
</dbReference>
<dbReference type="GO" id="GO:0001967">
    <property type="term" value="P:suckling behavior"/>
    <property type="evidence" value="ECO:0000315"/>
    <property type="project" value="MGI"/>
</dbReference>
<dbReference type="FunFam" id="1.20.1540.10:FF:000016">
    <property type="entry name" value="Derlin"/>
    <property type="match status" value="1"/>
</dbReference>
<dbReference type="InterPro" id="IPR007599">
    <property type="entry name" value="DER1"/>
</dbReference>
<dbReference type="InterPro" id="IPR035952">
    <property type="entry name" value="Rhomboid-like_sf"/>
</dbReference>
<dbReference type="PANTHER" id="PTHR11009">
    <property type="entry name" value="DER1-LIKE PROTEIN, DERLIN"/>
    <property type="match status" value="1"/>
</dbReference>
<dbReference type="Pfam" id="PF04511">
    <property type="entry name" value="DER1"/>
    <property type="match status" value="1"/>
</dbReference>
<dbReference type="SUPFAM" id="SSF144091">
    <property type="entry name" value="Rhomboid-like"/>
    <property type="match status" value="1"/>
</dbReference>
<reference key="1">
    <citation type="journal article" date="2001" name="Biochem. Biophys. Res. Commun.">
        <title>Cloning and characterization of F-LANa, upregulated in human liver cancer.</title>
        <authorList>
            <person name="Ying H."/>
            <person name="Yu Y."/>
            <person name="Xu Y."/>
        </authorList>
    </citation>
    <scope>NUCLEOTIDE SEQUENCE [MRNA] (ISOFORM 1)</scope>
    <scope>TISSUE SPECIFICITY</scope>
    <source>
        <tissue>Liver</tissue>
    </source>
</reference>
<reference key="2">
    <citation type="journal article" date="2005" name="Science">
        <title>The transcriptional landscape of the mammalian genome.</title>
        <authorList>
            <person name="Carninci P."/>
            <person name="Kasukawa T."/>
            <person name="Katayama S."/>
            <person name="Gough J."/>
            <person name="Frith M.C."/>
            <person name="Maeda N."/>
            <person name="Oyama R."/>
            <person name="Ravasi T."/>
            <person name="Lenhard B."/>
            <person name="Wells C."/>
            <person name="Kodzius R."/>
            <person name="Shimokawa K."/>
            <person name="Bajic V.B."/>
            <person name="Brenner S.E."/>
            <person name="Batalov S."/>
            <person name="Forrest A.R."/>
            <person name="Zavolan M."/>
            <person name="Davis M.J."/>
            <person name="Wilming L.G."/>
            <person name="Aidinis V."/>
            <person name="Allen J.E."/>
            <person name="Ambesi-Impiombato A."/>
            <person name="Apweiler R."/>
            <person name="Aturaliya R.N."/>
            <person name="Bailey T.L."/>
            <person name="Bansal M."/>
            <person name="Baxter L."/>
            <person name="Beisel K.W."/>
            <person name="Bersano T."/>
            <person name="Bono H."/>
            <person name="Chalk A.M."/>
            <person name="Chiu K.P."/>
            <person name="Choudhary V."/>
            <person name="Christoffels A."/>
            <person name="Clutterbuck D.R."/>
            <person name="Crowe M.L."/>
            <person name="Dalla E."/>
            <person name="Dalrymple B.P."/>
            <person name="de Bono B."/>
            <person name="Della Gatta G."/>
            <person name="di Bernardo D."/>
            <person name="Down T."/>
            <person name="Engstrom P."/>
            <person name="Fagiolini M."/>
            <person name="Faulkner G."/>
            <person name="Fletcher C.F."/>
            <person name="Fukushima T."/>
            <person name="Furuno M."/>
            <person name="Futaki S."/>
            <person name="Gariboldi M."/>
            <person name="Georgii-Hemming P."/>
            <person name="Gingeras T.R."/>
            <person name="Gojobori T."/>
            <person name="Green R.E."/>
            <person name="Gustincich S."/>
            <person name="Harbers M."/>
            <person name="Hayashi Y."/>
            <person name="Hensch T.K."/>
            <person name="Hirokawa N."/>
            <person name="Hill D."/>
            <person name="Huminiecki L."/>
            <person name="Iacono M."/>
            <person name="Ikeo K."/>
            <person name="Iwama A."/>
            <person name="Ishikawa T."/>
            <person name="Jakt M."/>
            <person name="Kanapin A."/>
            <person name="Katoh M."/>
            <person name="Kawasawa Y."/>
            <person name="Kelso J."/>
            <person name="Kitamura H."/>
            <person name="Kitano H."/>
            <person name="Kollias G."/>
            <person name="Krishnan S.P."/>
            <person name="Kruger A."/>
            <person name="Kummerfeld S.K."/>
            <person name="Kurochkin I.V."/>
            <person name="Lareau L.F."/>
            <person name="Lazarevic D."/>
            <person name="Lipovich L."/>
            <person name="Liu J."/>
            <person name="Liuni S."/>
            <person name="McWilliam S."/>
            <person name="Madan Babu M."/>
            <person name="Madera M."/>
            <person name="Marchionni L."/>
            <person name="Matsuda H."/>
            <person name="Matsuzawa S."/>
            <person name="Miki H."/>
            <person name="Mignone F."/>
            <person name="Miyake S."/>
            <person name="Morris K."/>
            <person name="Mottagui-Tabar S."/>
            <person name="Mulder N."/>
            <person name="Nakano N."/>
            <person name="Nakauchi H."/>
            <person name="Ng P."/>
            <person name="Nilsson R."/>
            <person name="Nishiguchi S."/>
            <person name="Nishikawa S."/>
            <person name="Nori F."/>
            <person name="Ohara O."/>
            <person name="Okazaki Y."/>
            <person name="Orlando V."/>
            <person name="Pang K.C."/>
            <person name="Pavan W.J."/>
            <person name="Pavesi G."/>
            <person name="Pesole G."/>
            <person name="Petrovsky N."/>
            <person name="Piazza S."/>
            <person name="Reed J."/>
            <person name="Reid J.F."/>
            <person name="Ring B.Z."/>
            <person name="Ringwald M."/>
            <person name="Rost B."/>
            <person name="Ruan Y."/>
            <person name="Salzberg S.L."/>
            <person name="Sandelin A."/>
            <person name="Schneider C."/>
            <person name="Schoenbach C."/>
            <person name="Sekiguchi K."/>
            <person name="Semple C.A."/>
            <person name="Seno S."/>
            <person name="Sessa L."/>
            <person name="Sheng Y."/>
            <person name="Shibata Y."/>
            <person name="Shimada H."/>
            <person name="Shimada K."/>
            <person name="Silva D."/>
            <person name="Sinclair B."/>
            <person name="Sperling S."/>
            <person name="Stupka E."/>
            <person name="Sugiura K."/>
            <person name="Sultana R."/>
            <person name="Takenaka Y."/>
            <person name="Taki K."/>
            <person name="Tammoja K."/>
            <person name="Tan S.L."/>
            <person name="Tang S."/>
            <person name="Taylor M.S."/>
            <person name="Tegner J."/>
            <person name="Teichmann S.A."/>
            <person name="Ueda H.R."/>
            <person name="van Nimwegen E."/>
            <person name="Verardo R."/>
            <person name="Wei C.L."/>
            <person name="Yagi K."/>
            <person name="Yamanishi H."/>
            <person name="Zabarovsky E."/>
            <person name="Zhu S."/>
            <person name="Zimmer A."/>
            <person name="Hide W."/>
            <person name="Bult C."/>
            <person name="Grimmond S.M."/>
            <person name="Teasdale R.D."/>
            <person name="Liu E.T."/>
            <person name="Brusic V."/>
            <person name="Quackenbush J."/>
            <person name="Wahlestedt C."/>
            <person name="Mattick J.S."/>
            <person name="Hume D.A."/>
            <person name="Kai C."/>
            <person name="Sasaki D."/>
            <person name="Tomaru Y."/>
            <person name="Fukuda S."/>
            <person name="Kanamori-Katayama M."/>
            <person name="Suzuki M."/>
            <person name="Aoki J."/>
            <person name="Arakawa T."/>
            <person name="Iida J."/>
            <person name="Imamura K."/>
            <person name="Itoh M."/>
            <person name="Kato T."/>
            <person name="Kawaji H."/>
            <person name="Kawagashira N."/>
            <person name="Kawashima T."/>
            <person name="Kojima M."/>
            <person name="Kondo S."/>
            <person name="Konno H."/>
            <person name="Nakano K."/>
            <person name="Ninomiya N."/>
            <person name="Nishio T."/>
            <person name="Okada M."/>
            <person name="Plessy C."/>
            <person name="Shibata K."/>
            <person name="Shiraki T."/>
            <person name="Suzuki S."/>
            <person name="Tagami M."/>
            <person name="Waki K."/>
            <person name="Watahiki A."/>
            <person name="Okamura-Oho Y."/>
            <person name="Suzuki H."/>
            <person name="Kawai J."/>
            <person name="Hayashizaki Y."/>
        </authorList>
    </citation>
    <scope>NUCLEOTIDE SEQUENCE [LARGE SCALE MRNA] (ISOFORMS 1 AND 2)</scope>
    <source>
        <strain>C57BL/6J</strain>
        <tissue>Cerebellum</tissue>
        <tissue>Embryo</tissue>
        <tissue>Head</tissue>
    </source>
</reference>
<reference key="3">
    <citation type="journal article" date="2004" name="Genome Res.">
        <title>The status, quality, and expansion of the NIH full-length cDNA project: the Mammalian Gene Collection (MGC).</title>
        <authorList>
            <consortium name="The MGC Project Team"/>
        </authorList>
    </citation>
    <scope>NUCLEOTIDE SEQUENCE [LARGE SCALE MRNA] (ISOFORM 1)</scope>
    <source>
        <tissue>Mammary tumor</tissue>
    </source>
</reference>
<reference key="4">
    <citation type="journal article" date="2005" name="Proc. Natl. Acad. Sci. U.S.A.">
        <title>Multiprotein complexes that link dislocation, ubiquitination, and extraction of misfolded proteins from the endoplasmic reticulum membrane.</title>
        <authorList>
            <person name="Lilley B.N."/>
            <person name="Ploegh H.L."/>
        </authorList>
    </citation>
    <scope>TISSUE SPECIFICITY</scope>
    <scope>INDUCTION</scope>
</reference>
<reference key="5">
    <citation type="journal article" date="2006" name="J. Cell Biol.">
        <title>Derlin-2 and Derlin-3 are regulated by the mammalian unfolded protein response and are required for ER-associated degradation.</title>
        <authorList>
            <person name="Oda Y."/>
            <person name="Okada T."/>
            <person name="Yoshida H."/>
            <person name="Kaufman R.J."/>
            <person name="Nagata K."/>
            <person name="Mori K."/>
        </authorList>
    </citation>
    <scope>INDUCTION</scope>
</reference>
<reference key="6">
    <citation type="journal article" date="2010" name="Cell">
        <title>A tissue-specific atlas of mouse protein phosphorylation and expression.</title>
        <authorList>
            <person name="Huttlin E.L."/>
            <person name="Jedrychowski M.P."/>
            <person name="Elias J.E."/>
            <person name="Goswami T."/>
            <person name="Rad R."/>
            <person name="Beausoleil S.A."/>
            <person name="Villen J."/>
            <person name="Haas W."/>
            <person name="Sowa M.E."/>
            <person name="Gygi S.P."/>
        </authorList>
    </citation>
    <scope>IDENTIFICATION BY MASS SPECTROMETRY [LARGE SCALE ANALYSIS]</scope>
    <source>
        <tissue>Brown adipose tissue</tissue>
        <tissue>Heart</tissue>
        <tissue>Kidney</tissue>
        <tissue>Liver</tissue>
        <tissue>Lung</tissue>
        <tissue>Pancreas</tissue>
        <tissue>Spleen</tissue>
        <tissue>Testis</tissue>
    </source>
</reference>
<reference key="7">
    <citation type="journal article" date="2011" name="J. Biol. Chem.">
        <title>Selenoprotein K binds multiprotein complexes and is involved in the regulation of endoplasmic reticulum homeostasis.</title>
        <authorList>
            <person name="Shchedrina V.A."/>
            <person name="Everley R.A."/>
            <person name="Zhang Y."/>
            <person name="Gygi S.P."/>
            <person name="Hatfield D.L."/>
            <person name="Gladyshev V.N."/>
        </authorList>
    </citation>
    <scope>INTERACTION WITH SELENOK AND SELENOS</scope>
</reference>
<reference key="8">
    <citation type="journal article" date="2014" name="Dev. Biol.">
        <title>Contribution of calumin to embryogenesis through participation in the endoplasmic reticulum-associated degradation activity.</title>
        <authorList>
            <person name="Yamamoto S."/>
            <person name="Yamazaki T."/>
            <person name="Komazaki S."/>
            <person name="Yamashita T."/>
            <person name="Osaki M."/>
            <person name="Matsubayashi M."/>
            <person name="Kidoya H."/>
            <person name="Takakura N."/>
            <person name="Yamazaki D."/>
            <person name="Kakizawa S."/>
        </authorList>
    </citation>
    <scope>INTERACTION WITH CCDC47</scope>
</reference>
<gene>
    <name evidence="14" type="primary">Derl2</name>
    <name type="synonym">Der2</name>
    <name evidence="13" type="synonym">Flana</name>
</gene>
<organism>
    <name type="scientific">Mus musculus</name>
    <name type="common">Mouse</name>
    <dbReference type="NCBI Taxonomy" id="10090"/>
    <lineage>
        <taxon>Eukaryota</taxon>
        <taxon>Metazoa</taxon>
        <taxon>Chordata</taxon>
        <taxon>Craniata</taxon>
        <taxon>Vertebrata</taxon>
        <taxon>Euteleostomi</taxon>
        <taxon>Mammalia</taxon>
        <taxon>Eutheria</taxon>
        <taxon>Euarchontoglires</taxon>
        <taxon>Glires</taxon>
        <taxon>Rodentia</taxon>
        <taxon>Myomorpha</taxon>
        <taxon>Muroidea</taxon>
        <taxon>Muridae</taxon>
        <taxon>Murinae</taxon>
        <taxon>Mus</taxon>
        <taxon>Mus</taxon>
    </lineage>
</organism>
<sequence length="239" mass="27640">MAYQSLRLEYLQIPPVSRAYTTACVLTTAAVQLELITPFQLYFNPELIFKHFQIWRLITNFLFFGPVGFNFLFNMIFLYRYCRMLEEGSFRGRTADFVFMFLFGGFLMTLFGLFVSLVFLGQAFTIMLVYVWSRRNPYVRMNFFGLLNFQAPFLPWVLMGFSLLLGNSIIVDLLGIAVGHIYFFLEDIFPNQPGGIRILKTPSILRTIFDTPDEDPNYNPLPEERPGGFAWGEGQRLGG</sequence>